<protein>
    <recommendedName>
        <fullName evidence="1">Phosphoribosyl-AMP cyclohydrolase</fullName>
        <shortName evidence="1">PRA-CH</shortName>
        <ecNumber evidence="1">3.5.4.19</ecNumber>
    </recommendedName>
</protein>
<keyword id="KW-0028">Amino-acid biosynthesis</keyword>
<keyword id="KW-0963">Cytoplasm</keyword>
<keyword id="KW-0368">Histidine biosynthesis</keyword>
<keyword id="KW-0378">Hydrolase</keyword>
<keyword id="KW-0460">Magnesium</keyword>
<keyword id="KW-0479">Metal-binding</keyword>
<keyword id="KW-1185">Reference proteome</keyword>
<keyword id="KW-0862">Zinc</keyword>
<feature type="chain" id="PRO_1000063390" description="Phosphoribosyl-AMP cyclohydrolase">
    <location>
        <begin position="1"/>
        <end position="134"/>
    </location>
</feature>
<feature type="binding site" evidence="1">
    <location>
        <position position="80"/>
    </location>
    <ligand>
        <name>Mg(2+)</name>
        <dbReference type="ChEBI" id="CHEBI:18420"/>
    </ligand>
</feature>
<feature type="binding site" evidence="1">
    <location>
        <position position="81"/>
    </location>
    <ligand>
        <name>Zn(2+)</name>
        <dbReference type="ChEBI" id="CHEBI:29105"/>
        <note>ligand shared between dimeric partners</note>
    </ligand>
</feature>
<feature type="binding site" evidence="1">
    <location>
        <position position="82"/>
    </location>
    <ligand>
        <name>Mg(2+)</name>
        <dbReference type="ChEBI" id="CHEBI:18420"/>
    </ligand>
</feature>
<feature type="binding site" evidence="1">
    <location>
        <position position="84"/>
    </location>
    <ligand>
        <name>Mg(2+)</name>
        <dbReference type="ChEBI" id="CHEBI:18420"/>
    </ligand>
</feature>
<feature type="binding site" evidence="1">
    <location>
        <position position="98"/>
    </location>
    <ligand>
        <name>Zn(2+)</name>
        <dbReference type="ChEBI" id="CHEBI:29105"/>
        <note>ligand shared between dimeric partners</note>
    </ligand>
</feature>
<feature type="binding site" evidence="1">
    <location>
        <position position="105"/>
    </location>
    <ligand>
        <name>Zn(2+)</name>
        <dbReference type="ChEBI" id="CHEBI:29105"/>
        <note>ligand shared between dimeric partners</note>
    </ligand>
</feature>
<gene>
    <name evidence="1" type="primary">hisI</name>
    <name type="ordered locus">BAV3320</name>
</gene>
<evidence type="ECO:0000255" key="1">
    <source>
        <dbReference type="HAMAP-Rule" id="MF_01021"/>
    </source>
</evidence>
<comment type="function">
    <text evidence="1">Catalyzes the hydrolysis of the adenine ring of phosphoribosyl-AMP.</text>
</comment>
<comment type="catalytic activity">
    <reaction evidence="1">
        <text>1-(5-phospho-beta-D-ribosyl)-5'-AMP + H2O = 1-(5-phospho-beta-D-ribosyl)-5-[(5-phospho-beta-D-ribosylamino)methylideneamino]imidazole-4-carboxamide</text>
        <dbReference type="Rhea" id="RHEA:20049"/>
        <dbReference type="ChEBI" id="CHEBI:15377"/>
        <dbReference type="ChEBI" id="CHEBI:58435"/>
        <dbReference type="ChEBI" id="CHEBI:59457"/>
        <dbReference type="EC" id="3.5.4.19"/>
    </reaction>
</comment>
<comment type="cofactor">
    <cofactor evidence="1">
        <name>Mg(2+)</name>
        <dbReference type="ChEBI" id="CHEBI:18420"/>
    </cofactor>
    <text evidence="1">Binds 1 Mg(2+) ion per subunit.</text>
</comment>
<comment type="cofactor">
    <cofactor evidence="1">
        <name>Zn(2+)</name>
        <dbReference type="ChEBI" id="CHEBI:29105"/>
    </cofactor>
    <text evidence="1">Binds 1 zinc ion per subunit.</text>
</comment>
<comment type="pathway">
    <text evidence="1">Amino-acid biosynthesis; L-histidine biosynthesis; L-histidine from 5-phospho-alpha-D-ribose 1-diphosphate: step 3/9.</text>
</comment>
<comment type="subunit">
    <text evidence="1">Homodimer.</text>
</comment>
<comment type="subcellular location">
    <subcellularLocation>
        <location evidence="1">Cytoplasm</location>
    </subcellularLocation>
</comment>
<comment type="similarity">
    <text evidence="1">Belongs to the PRA-CH family.</text>
</comment>
<organism>
    <name type="scientific">Bordetella avium (strain 197N)</name>
    <dbReference type="NCBI Taxonomy" id="360910"/>
    <lineage>
        <taxon>Bacteria</taxon>
        <taxon>Pseudomonadati</taxon>
        <taxon>Pseudomonadota</taxon>
        <taxon>Betaproteobacteria</taxon>
        <taxon>Burkholderiales</taxon>
        <taxon>Alcaligenaceae</taxon>
        <taxon>Bordetella</taxon>
    </lineage>
</organism>
<proteinExistence type="inferred from homology"/>
<reference key="1">
    <citation type="journal article" date="2006" name="J. Bacteriol.">
        <title>Comparison of the genome sequence of the poultry pathogen Bordetella avium with those of B. bronchiseptica, B. pertussis, and B. parapertussis reveals extensive diversity in surface structures associated with host interaction.</title>
        <authorList>
            <person name="Sebaihia M."/>
            <person name="Preston A."/>
            <person name="Maskell D.J."/>
            <person name="Kuzmiak H."/>
            <person name="Connell T.D."/>
            <person name="King N.D."/>
            <person name="Orndorff P.E."/>
            <person name="Miyamoto D.M."/>
            <person name="Thomson N.R."/>
            <person name="Harris D."/>
            <person name="Goble A."/>
            <person name="Lord A."/>
            <person name="Murphy L."/>
            <person name="Quail M.A."/>
            <person name="Rutter S."/>
            <person name="Squares R."/>
            <person name="Squares S."/>
            <person name="Woodward J."/>
            <person name="Parkhill J."/>
            <person name="Temple L.M."/>
        </authorList>
    </citation>
    <scope>NUCLEOTIDE SEQUENCE [LARGE SCALE GENOMIC DNA]</scope>
    <source>
        <strain>197N</strain>
    </source>
</reference>
<name>HIS3_BORA1</name>
<accession>Q2KTT0</accession>
<dbReference type="EC" id="3.5.4.19" evidence="1"/>
<dbReference type="EMBL" id="AM167904">
    <property type="protein sequence ID" value="CAJ50930.1"/>
    <property type="molecule type" value="Genomic_DNA"/>
</dbReference>
<dbReference type="RefSeq" id="WP_012418957.1">
    <property type="nucleotide sequence ID" value="NC_010645.1"/>
</dbReference>
<dbReference type="SMR" id="Q2KTT0"/>
<dbReference type="STRING" id="360910.BAV3320"/>
<dbReference type="KEGG" id="bav:BAV3320"/>
<dbReference type="eggNOG" id="COG0139">
    <property type="taxonomic scope" value="Bacteria"/>
</dbReference>
<dbReference type="HOGENOM" id="CLU_048577_5_0_4"/>
<dbReference type="OrthoDB" id="9795769at2"/>
<dbReference type="UniPathway" id="UPA00031">
    <property type="reaction ID" value="UER00008"/>
</dbReference>
<dbReference type="Proteomes" id="UP000001977">
    <property type="component" value="Chromosome"/>
</dbReference>
<dbReference type="GO" id="GO:0005737">
    <property type="term" value="C:cytoplasm"/>
    <property type="evidence" value="ECO:0007669"/>
    <property type="project" value="UniProtKB-SubCell"/>
</dbReference>
<dbReference type="GO" id="GO:0000287">
    <property type="term" value="F:magnesium ion binding"/>
    <property type="evidence" value="ECO:0007669"/>
    <property type="project" value="UniProtKB-UniRule"/>
</dbReference>
<dbReference type="GO" id="GO:0004635">
    <property type="term" value="F:phosphoribosyl-AMP cyclohydrolase activity"/>
    <property type="evidence" value="ECO:0007669"/>
    <property type="project" value="UniProtKB-UniRule"/>
</dbReference>
<dbReference type="GO" id="GO:0008270">
    <property type="term" value="F:zinc ion binding"/>
    <property type="evidence" value="ECO:0007669"/>
    <property type="project" value="UniProtKB-UniRule"/>
</dbReference>
<dbReference type="GO" id="GO:0000105">
    <property type="term" value="P:L-histidine biosynthetic process"/>
    <property type="evidence" value="ECO:0007669"/>
    <property type="project" value="UniProtKB-UniRule"/>
</dbReference>
<dbReference type="FunFam" id="3.10.20.810:FF:000001">
    <property type="entry name" value="Histidine biosynthesis bifunctional protein HisIE"/>
    <property type="match status" value="1"/>
</dbReference>
<dbReference type="Gene3D" id="3.10.20.810">
    <property type="entry name" value="Phosphoribosyl-AMP cyclohydrolase"/>
    <property type="match status" value="1"/>
</dbReference>
<dbReference type="HAMAP" id="MF_01021">
    <property type="entry name" value="HisI"/>
    <property type="match status" value="1"/>
</dbReference>
<dbReference type="InterPro" id="IPR026660">
    <property type="entry name" value="PRA-CH"/>
</dbReference>
<dbReference type="InterPro" id="IPR002496">
    <property type="entry name" value="PRib_AMP_CycHydrolase_dom"/>
</dbReference>
<dbReference type="InterPro" id="IPR038019">
    <property type="entry name" value="PRib_AMP_CycHydrolase_sf"/>
</dbReference>
<dbReference type="NCBIfam" id="NF000768">
    <property type="entry name" value="PRK00051.1"/>
    <property type="match status" value="1"/>
</dbReference>
<dbReference type="PANTHER" id="PTHR42945">
    <property type="entry name" value="HISTIDINE BIOSYNTHESIS BIFUNCTIONAL PROTEIN"/>
    <property type="match status" value="1"/>
</dbReference>
<dbReference type="PANTHER" id="PTHR42945:SF1">
    <property type="entry name" value="HISTIDINE BIOSYNTHESIS BIFUNCTIONAL PROTEIN HIS7"/>
    <property type="match status" value="1"/>
</dbReference>
<dbReference type="Pfam" id="PF01502">
    <property type="entry name" value="PRA-CH"/>
    <property type="match status" value="1"/>
</dbReference>
<dbReference type="SUPFAM" id="SSF141734">
    <property type="entry name" value="HisI-like"/>
    <property type="match status" value="1"/>
</dbReference>
<sequence length="134" mass="15013">MSTEPDWMADVVFDADGLIPAIAQDAENGQILMVAWMNRESLAETAATGRAVYWSRSRKKLWRKGEESGHAQQVHELRLDCDGDVILLKVHQNGGIACHTGRASCFYRRLDGTSQRAAWVTVDPVLKDPELIYK</sequence>